<keyword id="KW-0687">Ribonucleoprotein</keyword>
<keyword id="KW-0689">Ribosomal protein</keyword>
<keyword id="KW-0694">RNA-binding</keyword>
<keyword id="KW-0699">rRNA-binding</keyword>
<evidence type="ECO:0000255" key="1">
    <source>
        <dbReference type="HAMAP-Rule" id="MF_00531"/>
    </source>
</evidence>
<evidence type="ECO:0000256" key="2">
    <source>
        <dbReference type="SAM" id="MobiDB-lite"/>
    </source>
</evidence>
<evidence type="ECO:0000305" key="3"/>
<proteinExistence type="inferred from homology"/>
<dbReference type="EMBL" id="AP009493">
    <property type="protein sequence ID" value="BAG19659.1"/>
    <property type="molecule type" value="Genomic_DNA"/>
</dbReference>
<dbReference type="RefSeq" id="WP_003966956.1">
    <property type="nucleotide sequence ID" value="NC_010572.1"/>
</dbReference>
<dbReference type="SMR" id="B1W403"/>
<dbReference type="GeneID" id="97294869"/>
<dbReference type="KEGG" id="sgr:SGR_2830"/>
<dbReference type="eggNOG" id="COG0185">
    <property type="taxonomic scope" value="Bacteria"/>
</dbReference>
<dbReference type="HOGENOM" id="CLU_144911_0_1_11"/>
<dbReference type="Proteomes" id="UP000001685">
    <property type="component" value="Chromosome"/>
</dbReference>
<dbReference type="GO" id="GO:0005737">
    <property type="term" value="C:cytoplasm"/>
    <property type="evidence" value="ECO:0007669"/>
    <property type="project" value="UniProtKB-ARBA"/>
</dbReference>
<dbReference type="GO" id="GO:0015935">
    <property type="term" value="C:small ribosomal subunit"/>
    <property type="evidence" value="ECO:0007669"/>
    <property type="project" value="InterPro"/>
</dbReference>
<dbReference type="GO" id="GO:0019843">
    <property type="term" value="F:rRNA binding"/>
    <property type="evidence" value="ECO:0007669"/>
    <property type="project" value="UniProtKB-UniRule"/>
</dbReference>
<dbReference type="GO" id="GO:0003735">
    <property type="term" value="F:structural constituent of ribosome"/>
    <property type="evidence" value="ECO:0007669"/>
    <property type="project" value="InterPro"/>
</dbReference>
<dbReference type="GO" id="GO:0000028">
    <property type="term" value="P:ribosomal small subunit assembly"/>
    <property type="evidence" value="ECO:0007669"/>
    <property type="project" value="TreeGrafter"/>
</dbReference>
<dbReference type="GO" id="GO:0006412">
    <property type="term" value="P:translation"/>
    <property type="evidence" value="ECO:0007669"/>
    <property type="project" value="UniProtKB-UniRule"/>
</dbReference>
<dbReference type="FunFam" id="3.30.860.10:FF:000001">
    <property type="entry name" value="30S ribosomal protein S19"/>
    <property type="match status" value="1"/>
</dbReference>
<dbReference type="Gene3D" id="3.30.860.10">
    <property type="entry name" value="30s Ribosomal Protein S19, Chain A"/>
    <property type="match status" value="1"/>
</dbReference>
<dbReference type="HAMAP" id="MF_00531">
    <property type="entry name" value="Ribosomal_uS19"/>
    <property type="match status" value="1"/>
</dbReference>
<dbReference type="InterPro" id="IPR002222">
    <property type="entry name" value="Ribosomal_uS19"/>
</dbReference>
<dbReference type="InterPro" id="IPR005732">
    <property type="entry name" value="Ribosomal_uS19_bac-type"/>
</dbReference>
<dbReference type="InterPro" id="IPR020934">
    <property type="entry name" value="Ribosomal_uS19_CS"/>
</dbReference>
<dbReference type="InterPro" id="IPR023575">
    <property type="entry name" value="Ribosomal_uS19_SF"/>
</dbReference>
<dbReference type="NCBIfam" id="TIGR01050">
    <property type="entry name" value="rpsS_bact"/>
    <property type="match status" value="1"/>
</dbReference>
<dbReference type="PANTHER" id="PTHR11880">
    <property type="entry name" value="RIBOSOMAL PROTEIN S19P FAMILY MEMBER"/>
    <property type="match status" value="1"/>
</dbReference>
<dbReference type="PANTHER" id="PTHR11880:SF8">
    <property type="entry name" value="SMALL RIBOSOMAL SUBUNIT PROTEIN US19M"/>
    <property type="match status" value="1"/>
</dbReference>
<dbReference type="Pfam" id="PF00203">
    <property type="entry name" value="Ribosomal_S19"/>
    <property type="match status" value="1"/>
</dbReference>
<dbReference type="PIRSF" id="PIRSF002144">
    <property type="entry name" value="Ribosomal_S19"/>
    <property type="match status" value="1"/>
</dbReference>
<dbReference type="PRINTS" id="PR00975">
    <property type="entry name" value="RIBOSOMALS19"/>
</dbReference>
<dbReference type="SUPFAM" id="SSF54570">
    <property type="entry name" value="Ribosomal protein S19"/>
    <property type="match status" value="1"/>
</dbReference>
<dbReference type="PROSITE" id="PS00323">
    <property type="entry name" value="RIBOSOMAL_S19"/>
    <property type="match status" value="1"/>
</dbReference>
<sequence length="93" mass="10511">MPRSLKKGPFVDGHLIKKVDVQNEAGTKNVIKTWSRRSMIVPAMLGHTIAVHNGKIHVPVFVTESMVGHKLGEFSPTRTFRGHVKDDRKSKRR</sequence>
<feature type="chain" id="PRO_1000128039" description="Small ribosomal subunit protein uS19">
    <location>
        <begin position="1"/>
        <end position="93"/>
    </location>
</feature>
<feature type="region of interest" description="Disordered" evidence="2">
    <location>
        <begin position="74"/>
        <end position="93"/>
    </location>
</feature>
<feature type="compositionally biased region" description="Basic and acidic residues" evidence="2">
    <location>
        <begin position="83"/>
        <end position="93"/>
    </location>
</feature>
<comment type="function">
    <text evidence="1">Protein S19 forms a complex with S13 that binds strongly to the 16S ribosomal RNA.</text>
</comment>
<comment type="similarity">
    <text evidence="1">Belongs to the universal ribosomal protein uS19 family.</text>
</comment>
<name>RS19_STRGG</name>
<organism>
    <name type="scientific">Streptomyces griseus subsp. griseus (strain JCM 4626 / CBS 651.72 / NBRC 13350 / KCC S-0626 / ISP 5235)</name>
    <dbReference type="NCBI Taxonomy" id="455632"/>
    <lineage>
        <taxon>Bacteria</taxon>
        <taxon>Bacillati</taxon>
        <taxon>Actinomycetota</taxon>
        <taxon>Actinomycetes</taxon>
        <taxon>Kitasatosporales</taxon>
        <taxon>Streptomycetaceae</taxon>
        <taxon>Streptomyces</taxon>
    </lineage>
</organism>
<gene>
    <name evidence="1" type="primary">rpsS</name>
    <name type="ordered locus">SGR_2830</name>
</gene>
<accession>B1W403</accession>
<reference key="1">
    <citation type="journal article" date="2008" name="J. Bacteriol.">
        <title>Genome sequence of the streptomycin-producing microorganism Streptomyces griseus IFO 13350.</title>
        <authorList>
            <person name="Ohnishi Y."/>
            <person name="Ishikawa J."/>
            <person name="Hara H."/>
            <person name="Suzuki H."/>
            <person name="Ikenoya M."/>
            <person name="Ikeda H."/>
            <person name="Yamashita A."/>
            <person name="Hattori M."/>
            <person name="Horinouchi S."/>
        </authorList>
    </citation>
    <scope>NUCLEOTIDE SEQUENCE [LARGE SCALE GENOMIC DNA]</scope>
    <source>
        <strain>JCM 4626 / CBS 651.72 / NBRC 13350 / KCC S-0626 / ISP 5235</strain>
    </source>
</reference>
<protein>
    <recommendedName>
        <fullName evidence="1">Small ribosomal subunit protein uS19</fullName>
    </recommendedName>
    <alternativeName>
        <fullName evidence="3">30S ribosomal protein S19</fullName>
    </alternativeName>
</protein>